<name>RBFA_DEHMB</name>
<keyword id="KW-0963">Cytoplasm</keyword>
<keyword id="KW-0690">Ribosome biogenesis</keyword>
<organism>
    <name type="scientific">Dehalococcoides mccartyi (strain ATCC BAA-2100 / JCM 16839 / KCTC 5957 / BAV1)</name>
    <dbReference type="NCBI Taxonomy" id="216389"/>
    <lineage>
        <taxon>Bacteria</taxon>
        <taxon>Bacillati</taxon>
        <taxon>Chloroflexota</taxon>
        <taxon>Dehalococcoidia</taxon>
        <taxon>Dehalococcoidales</taxon>
        <taxon>Dehalococcoidaceae</taxon>
        <taxon>Dehalococcoides</taxon>
    </lineage>
</organism>
<feature type="chain" id="PRO_1000073759" description="Ribosome-binding factor A">
    <location>
        <begin position="1"/>
        <end position="118"/>
    </location>
</feature>
<comment type="function">
    <text evidence="1">One of several proteins that assist in the late maturation steps of the functional core of the 30S ribosomal subunit. Associates with free 30S ribosomal subunits (but not with 30S subunits that are part of 70S ribosomes or polysomes). Required for efficient processing of 16S rRNA. May interact with the 5'-terminal helix region of 16S rRNA.</text>
</comment>
<comment type="subunit">
    <text evidence="1">Monomer. Binds 30S ribosomal subunits, but not 50S ribosomal subunits or 70S ribosomes.</text>
</comment>
<comment type="subcellular location">
    <subcellularLocation>
        <location evidence="1">Cytoplasm</location>
    </subcellularLocation>
</comment>
<comment type="similarity">
    <text evidence="1">Belongs to the RbfA family.</text>
</comment>
<proteinExistence type="inferred from homology"/>
<accession>A5FQR5</accession>
<gene>
    <name evidence="1" type="primary">rbfA</name>
    <name type="ordered locus">DehaBAV1_0873</name>
</gene>
<evidence type="ECO:0000255" key="1">
    <source>
        <dbReference type="HAMAP-Rule" id="MF_00003"/>
    </source>
</evidence>
<protein>
    <recommendedName>
        <fullName evidence="1">Ribosome-binding factor A</fullName>
    </recommendedName>
</protein>
<dbReference type="EMBL" id="CP000688">
    <property type="protein sequence ID" value="ABQ17455.1"/>
    <property type="molecule type" value="Genomic_DNA"/>
</dbReference>
<dbReference type="SMR" id="A5FQR5"/>
<dbReference type="KEGG" id="deb:DehaBAV1_0873"/>
<dbReference type="PATRIC" id="fig|216389.18.peg.923"/>
<dbReference type="HOGENOM" id="CLU_089475_5_1_0"/>
<dbReference type="GO" id="GO:0005829">
    <property type="term" value="C:cytosol"/>
    <property type="evidence" value="ECO:0007669"/>
    <property type="project" value="TreeGrafter"/>
</dbReference>
<dbReference type="GO" id="GO:0043024">
    <property type="term" value="F:ribosomal small subunit binding"/>
    <property type="evidence" value="ECO:0007669"/>
    <property type="project" value="TreeGrafter"/>
</dbReference>
<dbReference type="GO" id="GO:0030490">
    <property type="term" value="P:maturation of SSU-rRNA"/>
    <property type="evidence" value="ECO:0007669"/>
    <property type="project" value="UniProtKB-UniRule"/>
</dbReference>
<dbReference type="Gene3D" id="3.30.300.20">
    <property type="match status" value="1"/>
</dbReference>
<dbReference type="HAMAP" id="MF_00003">
    <property type="entry name" value="RbfA"/>
    <property type="match status" value="1"/>
</dbReference>
<dbReference type="InterPro" id="IPR015946">
    <property type="entry name" value="KH_dom-like_a/b"/>
</dbReference>
<dbReference type="InterPro" id="IPR000238">
    <property type="entry name" value="RbfA"/>
</dbReference>
<dbReference type="InterPro" id="IPR023799">
    <property type="entry name" value="RbfA_dom_sf"/>
</dbReference>
<dbReference type="InterPro" id="IPR020053">
    <property type="entry name" value="Ribosome-bd_factorA_CS"/>
</dbReference>
<dbReference type="NCBIfam" id="TIGR00082">
    <property type="entry name" value="rbfA"/>
    <property type="match status" value="1"/>
</dbReference>
<dbReference type="PANTHER" id="PTHR33515">
    <property type="entry name" value="RIBOSOME-BINDING FACTOR A, CHLOROPLASTIC-RELATED"/>
    <property type="match status" value="1"/>
</dbReference>
<dbReference type="PANTHER" id="PTHR33515:SF1">
    <property type="entry name" value="RIBOSOME-BINDING FACTOR A, CHLOROPLASTIC-RELATED"/>
    <property type="match status" value="1"/>
</dbReference>
<dbReference type="Pfam" id="PF02033">
    <property type="entry name" value="RBFA"/>
    <property type="match status" value="1"/>
</dbReference>
<dbReference type="SUPFAM" id="SSF89919">
    <property type="entry name" value="Ribosome-binding factor A, RbfA"/>
    <property type="match status" value="1"/>
</dbReference>
<dbReference type="PROSITE" id="PS01319">
    <property type="entry name" value="RBFA"/>
    <property type="match status" value="1"/>
</dbReference>
<sequence>MSRRIKKLNQLFRADISALLQKEIRDPRLDTLLSVNEVDISEDMRHANVYVSHLAGDEHKDEILAALNAAAGFFRTEIAKKTDIRYMPVFHFVWDITIERGVRLNTLIDQVIHHQPED</sequence>
<reference key="1">
    <citation type="submission" date="2007-05" db="EMBL/GenBank/DDBJ databases">
        <title>Complete sequence of Dehalococcoides sp. BAV1.</title>
        <authorList>
            <consortium name="US DOE Joint Genome Institute"/>
            <person name="Copeland A."/>
            <person name="Lucas S."/>
            <person name="Lapidus A."/>
            <person name="Barry K."/>
            <person name="Detter J.C."/>
            <person name="Glavina del Rio T."/>
            <person name="Hammon N."/>
            <person name="Israni S."/>
            <person name="Pitluck S."/>
            <person name="Lowry S."/>
            <person name="Clum A."/>
            <person name="Schmutz J."/>
            <person name="Larimer F."/>
            <person name="Land M."/>
            <person name="Hauser L."/>
            <person name="Kyrpides N."/>
            <person name="Kim E."/>
            <person name="Ritalahti K.M."/>
            <person name="Loeffler F."/>
            <person name="Richardson P."/>
        </authorList>
    </citation>
    <scope>NUCLEOTIDE SEQUENCE [LARGE SCALE GENOMIC DNA]</scope>
    <source>
        <strain>ATCC BAA-2100 / JCM 16839 / KCTC 5957 / BAV1</strain>
    </source>
</reference>